<reference key="1">
    <citation type="journal article" date="2000" name="Nature">
        <title>Sequence and analysis of chromosome 1 of the plant Arabidopsis thaliana.</title>
        <authorList>
            <person name="Theologis A."/>
            <person name="Ecker J.R."/>
            <person name="Palm C.J."/>
            <person name="Federspiel N.A."/>
            <person name="Kaul S."/>
            <person name="White O."/>
            <person name="Alonso J."/>
            <person name="Altafi H."/>
            <person name="Araujo R."/>
            <person name="Bowman C.L."/>
            <person name="Brooks S.Y."/>
            <person name="Buehler E."/>
            <person name="Chan A."/>
            <person name="Chao Q."/>
            <person name="Chen H."/>
            <person name="Cheuk R.F."/>
            <person name="Chin C.W."/>
            <person name="Chung M.K."/>
            <person name="Conn L."/>
            <person name="Conway A.B."/>
            <person name="Conway A.R."/>
            <person name="Creasy T.H."/>
            <person name="Dewar K."/>
            <person name="Dunn P."/>
            <person name="Etgu P."/>
            <person name="Feldblyum T.V."/>
            <person name="Feng J.-D."/>
            <person name="Fong B."/>
            <person name="Fujii C.Y."/>
            <person name="Gill J.E."/>
            <person name="Goldsmith A.D."/>
            <person name="Haas B."/>
            <person name="Hansen N.F."/>
            <person name="Hughes B."/>
            <person name="Huizar L."/>
            <person name="Hunter J.L."/>
            <person name="Jenkins J."/>
            <person name="Johnson-Hopson C."/>
            <person name="Khan S."/>
            <person name="Khaykin E."/>
            <person name="Kim C.J."/>
            <person name="Koo H.L."/>
            <person name="Kremenetskaia I."/>
            <person name="Kurtz D.B."/>
            <person name="Kwan A."/>
            <person name="Lam B."/>
            <person name="Langin-Hooper S."/>
            <person name="Lee A."/>
            <person name="Lee J.M."/>
            <person name="Lenz C.A."/>
            <person name="Li J.H."/>
            <person name="Li Y.-P."/>
            <person name="Lin X."/>
            <person name="Liu S.X."/>
            <person name="Liu Z.A."/>
            <person name="Luros J.S."/>
            <person name="Maiti R."/>
            <person name="Marziali A."/>
            <person name="Militscher J."/>
            <person name="Miranda M."/>
            <person name="Nguyen M."/>
            <person name="Nierman W.C."/>
            <person name="Osborne B.I."/>
            <person name="Pai G."/>
            <person name="Peterson J."/>
            <person name="Pham P.K."/>
            <person name="Rizzo M."/>
            <person name="Rooney T."/>
            <person name="Rowley D."/>
            <person name="Sakano H."/>
            <person name="Salzberg S.L."/>
            <person name="Schwartz J.R."/>
            <person name="Shinn P."/>
            <person name="Southwick A.M."/>
            <person name="Sun H."/>
            <person name="Tallon L.J."/>
            <person name="Tambunga G."/>
            <person name="Toriumi M.J."/>
            <person name="Town C.D."/>
            <person name="Utterback T."/>
            <person name="Van Aken S."/>
            <person name="Vaysberg M."/>
            <person name="Vysotskaia V.S."/>
            <person name="Walker M."/>
            <person name="Wu D."/>
            <person name="Yu G."/>
            <person name="Fraser C.M."/>
            <person name="Venter J.C."/>
            <person name="Davis R.W."/>
        </authorList>
    </citation>
    <scope>NUCLEOTIDE SEQUENCE [LARGE SCALE GENOMIC DNA]</scope>
    <source>
        <strain>cv. Columbia</strain>
    </source>
</reference>
<reference key="2">
    <citation type="journal article" date="2017" name="Plant J.">
        <title>Araport11: a complete reannotation of the Arabidopsis thaliana reference genome.</title>
        <authorList>
            <person name="Cheng C.Y."/>
            <person name="Krishnakumar V."/>
            <person name="Chan A.P."/>
            <person name="Thibaud-Nissen F."/>
            <person name="Schobel S."/>
            <person name="Town C.D."/>
        </authorList>
    </citation>
    <scope>GENOME REANNOTATION</scope>
    <source>
        <strain>cv. Columbia</strain>
    </source>
</reference>
<reference key="3">
    <citation type="submission" date="2004-06" db="EMBL/GenBank/DDBJ databases">
        <title>Arabidopsis ORF clones.</title>
        <authorList>
            <person name="Cheuk R."/>
            <person name="Chen H."/>
            <person name="Kim C.J."/>
            <person name="Shinn P."/>
            <person name="Ecker J.R."/>
        </authorList>
    </citation>
    <scope>NUCLEOTIDE SEQUENCE [LARGE SCALE MRNA] (ISOFORM 2)</scope>
</reference>
<reference key="4">
    <citation type="journal article" date="2009" name="DNA Res.">
        <title>Analysis of multiple occurrences of alternative splicing events in Arabidopsis thaliana using novel sequenced full-length cDNAs.</title>
        <authorList>
            <person name="Iida K."/>
            <person name="Fukami-Kobayashi K."/>
            <person name="Toyoda A."/>
            <person name="Sakaki Y."/>
            <person name="Kobayashi M."/>
            <person name="Seki M."/>
            <person name="Shinozaki K."/>
        </authorList>
    </citation>
    <scope>NUCLEOTIDE SEQUENCE [LARGE SCALE MRNA] (ISOFORM 1)</scope>
</reference>
<reference key="5">
    <citation type="journal article" date="2006" name="J. Biol. Chem.">
        <title>Deficiency in phylloquinone (vitamin K1) methylation affects prenyl quinone distribution, photosystem I abundance, and anthocyanin accumulation in the Arabidopsis AtmenG mutant.</title>
        <authorList>
            <person name="Lohmann A."/>
            <person name="Schoettler M.A."/>
            <person name="Brehelin C."/>
            <person name="Kessler F."/>
            <person name="Bock R."/>
            <person name="Cahoon E.B."/>
            <person name="Doermann P."/>
        </authorList>
    </citation>
    <scope>FUNCTION</scope>
    <scope>CATALYTIC ACTIVITY</scope>
    <scope>SUBCELLULAR LOCATION</scope>
    <scope>DISRUPTION PHENOTYPE</scope>
</reference>
<organism>
    <name type="scientific">Arabidopsis thaliana</name>
    <name type="common">Mouse-ear cress</name>
    <dbReference type="NCBI Taxonomy" id="3702"/>
    <lineage>
        <taxon>Eukaryota</taxon>
        <taxon>Viridiplantae</taxon>
        <taxon>Streptophyta</taxon>
        <taxon>Embryophyta</taxon>
        <taxon>Tracheophyta</taxon>
        <taxon>Spermatophyta</taxon>
        <taxon>Magnoliopsida</taxon>
        <taxon>eudicotyledons</taxon>
        <taxon>Gunneridae</taxon>
        <taxon>Pentapetalae</taxon>
        <taxon>rosids</taxon>
        <taxon>malvids</taxon>
        <taxon>Brassicales</taxon>
        <taxon>Brassicaceae</taxon>
        <taxon>Camelineae</taxon>
        <taxon>Arabidopsis</taxon>
    </lineage>
</organism>
<keyword id="KW-0025">Alternative splicing</keyword>
<keyword id="KW-0150">Chloroplast</keyword>
<keyword id="KW-0489">Methyltransferase</keyword>
<keyword id="KW-0934">Plastid</keyword>
<keyword id="KW-1185">Reference proteome</keyword>
<keyword id="KW-0949">S-adenosyl-L-methionine</keyword>
<keyword id="KW-0808">Transferase</keyword>
<keyword id="KW-0809">Transit peptide</keyword>
<name>MENG_ARATH</name>
<evidence type="ECO:0000255" key="1">
    <source>
        <dbReference type="HAMAP-Rule" id="MF_03192"/>
    </source>
</evidence>
<evidence type="ECO:0000269" key="2">
    <source>
    </source>
</evidence>
<evidence type="ECO:0000303" key="3">
    <source ref="3"/>
</evidence>
<evidence type="ECO:0000305" key="4"/>
<comment type="function">
    <text evidence="1 2">Involved in the biosynthesis of phylloquinone (vitamin K1). Methyltransferase required for the conversion of 2-phytyl-1,4-beta-naphthoquinol to phylloquinol.</text>
</comment>
<comment type="catalytic activity">
    <reaction evidence="1 2">
        <text>demethylphylloquinol + S-adenosyl-L-methionine = phylloquinol + S-adenosyl-L-homocysteine + H(+)</text>
        <dbReference type="Rhea" id="RHEA:40551"/>
        <dbReference type="ChEBI" id="CHEBI:15378"/>
        <dbReference type="ChEBI" id="CHEBI:28433"/>
        <dbReference type="ChEBI" id="CHEBI:57856"/>
        <dbReference type="ChEBI" id="CHEBI:59789"/>
        <dbReference type="ChEBI" id="CHEBI:87844"/>
        <dbReference type="EC" id="2.1.1.329"/>
    </reaction>
</comment>
<comment type="subcellular location">
    <subcellularLocation>
        <location evidence="1 2">Plastid</location>
        <location evidence="1 2">Chloroplast</location>
    </subcellularLocation>
</comment>
<comment type="alternative products">
    <event type="alternative splicing"/>
    <isoform>
        <id>Q3ED65-1</id>
        <name>1</name>
        <sequence type="displayed"/>
    </isoform>
    <isoform>
        <id>Q3ED65-2</id>
        <name>2</name>
        <sequence type="described" ref="VSP_040914"/>
    </isoform>
</comment>
<comment type="disruption phenotype">
    <text evidence="2">Lack of phylloquinone and reduced growth under normal light. Loss of anthocyanin accumulation under high light.</text>
</comment>
<comment type="similarity">
    <text evidence="1">Belongs to the class I-like SAM-binding methyltransferase superfamily. MenG/UbiE family.</text>
</comment>
<comment type="sequence caution" evidence="4">
    <conflict type="erroneous gene model prediction">
        <sequence resource="EMBL-CDS" id="AAF79599"/>
    </conflict>
</comment>
<comment type="sequence caution" evidence="4">
    <conflict type="erroneous gene model prediction">
        <sequence resource="EMBL-CDS" id="AAF87008"/>
    </conflict>
</comment>
<sequence length="261" mass="29051">MAALLGIVSPVTFTGKHPVNSRSRRRTVVKCSNERRILFNRIAPVYDNLNDLLSLGQHRIWKNMAVSWSGAKKGDYVLDLCCGSGDLAFLLSEKVGSTGKVMGLDFSSEQLAVAATRQSLKARSCYKCIEWIEGDAIDLPFDDCEFDAVTMGYGLRNVVDRLRAMKEMYRVLKPGSRVSILDFNKSNQSVTTFMQGWMIDNVVVPVATVYDLAKEYEYLKYSINGYLTGEELETLALEAGFSSACHYEISGGFMGNLVAMR</sequence>
<proteinExistence type="evidence at protein level"/>
<accession>Q3ED65</accession>
<accession>Q6ID15</accession>
<accession>Q9LQD5</accession>
<accession>Q9LR22</accession>
<dbReference type="EC" id="2.1.1.329" evidence="1"/>
<dbReference type="EMBL" id="AC005292">
    <property type="protein sequence ID" value="AAF87008.1"/>
    <property type="status" value="ALT_SEQ"/>
    <property type="molecule type" value="Genomic_DNA"/>
</dbReference>
<dbReference type="EMBL" id="AC007945">
    <property type="protein sequence ID" value="AAF79599.1"/>
    <property type="status" value="ALT_SEQ"/>
    <property type="molecule type" value="Genomic_DNA"/>
</dbReference>
<dbReference type="EMBL" id="CP002684">
    <property type="protein sequence ID" value="AEE30377.1"/>
    <property type="molecule type" value="Genomic_DNA"/>
</dbReference>
<dbReference type="EMBL" id="CP002684">
    <property type="protein sequence ID" value="AEE30378.1"/>
    <property type="molecule type" value="Genomic_DNA"/>
</dbReference>
<dbReference type="EMBL" id="CP002684">
    <property type="protein sequence ID" value="AEE30379.1"/>
    <property type="molecule type" value="Genomic_DNA"/>
</dbReference>
<dbReference type="EMBL" id="BT014858">
    <property type="protein sequence ID" value="AAT41841.1"/>
    <property type="molecule type" value="mRNA"/>
</dbReference>
<dbReference type="EMBL" id="AK317221">
    <property type="protein sequence ID" value="BAH19903.1"/>
    <property type="molecule type" value="mRNA"/>
</dbReference>
<dbReference type="PIR" id="F86367">
    <property type="entry name" value="F86367"/>
</dbReference>
<dbReference type="RefSeq" id="NP_173750.3">
    <molecule id="Q3ED65-1"/>
    <property type="nucleotide sequence ID" value="NM_102185.4"/>
</dbReference>
<dbReference type="RefSeq" id="NP_973894.1">
    <molecule id="Q3ED65-2"/>
    <property type="nucleotide sequence ID" value="NM_202165.1"/>
</dbReference>
<dbReference type="RefSeq" id="NP_973895.1">
    <molecule id="Q3ED65-2"/>
    <property type="nucleotide sequence ID" value="NM_202166.2"/>
</dbReference>
<dbReference type="SMR" id="Q3ED65"/>
<dbReference type="FunCoup" id="Q3ED65">
    <property type="interactions" value="725"/>
</dbReference>
<dbReference type="STRING" id="3702.Q3ED65"/>
<dbReference type="iPTMnet" id="Q3ED65"/>
<dbReference type="PaxDb" id="3702-AT1G23360.1"/>
<dbReference type="ProteomicsDB" id="232229">
    <molecule id="Q3ED65-1"/>
</dbReference>
<dbReference type="EnsemblPlants" id="AT1G23360.1">
    <molecule id="Q3ED65-1"/>
    <property type="protein sequence ID" value="AT1G23360.1"/>
    <property type="gene ID" value="AT1G23360"/>
</dbReference>
<dbReference type="EnsemblPlants" id="AT1G23360.2">
    <molecule id="Q3ED65-2"/>
    <property type="protein sequence ID" value="AT1G23360.2"/>
    <property type="gene ID" value="AT1G23360"/>
</dbReference>
<dbReference type="EnsemblPlants" id="AT1G23360.3">
    <molecule id="Q3ED65-2"/>
    <property type="protein sequence ID" value="AT1G23360.3"/>
    <property type="gene ID" value="AT1G23360"/>
</dbReference>
<dbReference type="GeneID" id="838945"/>
<dbReference type="Gramene" id="AT1G23360.1">
    <molecule id="Q3ED65-1"/>
    <property type="protein sequence ID" value="AT1G23360.1"/>
    <property type="gene ID" value="AT1G23360"/>
</dbReference>
<dbReference type="Gramene" id="AT1G23360.2">
    <molecule id="Q3ED65-2"/>
    <property type="protein sequence ID" value="AT1G23360.2"/>
    <property type="gene ID" value="AT1G23360"/>
</dbReference>
<dbReference type="Gramene" id="AT1G23360.3">
    <molecule id="Q3ED65-2"/>
    <property type="protein sequence ID" value="AT1G23360.3"/>
    <property type="gene ID" value="AT1G23360"/>
</dbReference>
<dbReference type="KEGG" id="ath:AT1G23360"/>
<dbReference type="Araport" id="AT1G23360"/>
<dbReference type="TAIR" id="AT1G23360">
    <property type="gene designation" value="MENG"/>
</dbReference>
<dbReference type="eggNOG" id="KOG1540">
    <property type="taxonomic scope" value="Eukaryota"/>
</dbReference>
<dbReference type="HOGENOM" id="CLU_037990_0_0_1"/>
<dbReference type="InParanoid" id="Q3ED65"/>
<dbReference type="OMA" id="RYYWDTI"/>
<dbReference type="PhylomeDB" id="Q3ED65"/>
<dbReference type="BioCyc" id="ARA:AT1G23360-MONOMER"/>
<dbReference type="BRENDA" id="2.1.1.329">
    <property type="organism ID" value="399"/>
</dbReference>
<dbReference type="PRO" id="PR:Q3ED65"/>
<dbReference type="Proteomes" id="UP000006548">
    <property type="component" value="Chromosome 1"/>
</dbReference>
<dbReference type="ExpressionAtlas" id="Q3ED65">
    <property type="expression patterns" value="baseline and differential"/>
</dbReference>
<dbReference type="GO" id="GO:0009507">
    <property type="term" value="C:chloroplast"/>
    <property type="evidence" value="ECO:0000314"/>
    <property type="project" value="TAIR"/>
</dbReference>
<dbReference type="GO" id="GO:0052624">
    <property type="term" value="F:2-phytyl-1,4-naphthoquinone methyltransferase activity"/>
    <property type="evidence" value="ECO:0000315"/>
    <property type="project" value="TAIR"/>
</dbReference>
<dbReference type="GO" id="GO:0032259">
    <property type="term" value="P:methylation"/>
    <property type="evidence" value="ECO:0007669"/>
    <property type="project" value="UniProtKB-KW"/>
</dbReference>
<dbReference type="GO" id="GO:0042372">
    <property type="term" value="P:phylloquinone biosynthetic process"/>
    <property type="evidence" value="ECO:0000315"/>
    <property type="project" value="TAIR"/>
</dbReference>
<dbReference type="CDD" id="cd02440">
    <property type="entry name" value="AdoMet_MTases"/>
    <property type="match status" value="1"/>
</dbReference>
<dbReference type="FunFam" id="3.40.50.150:FF:000415">
    <property type="entry name" value="2-phytyl-1,4-beta-naphthoquinone methyltransferase, chloroplastic"/>
    <property type="match status" value="1"/>
</dbReference>
<dbReference type="Gene3D" id="3.40.50.150">
    <property type="entry name" value="Vaccinia Virus protein VP39"/>
    <property type="match status" value="1"/>
</dbReference>
<dbReference type="HAMAP" id="MF_01982">
    <property type="entry name" value="MenG_phylloquinone_subfam"/>
    <property type="match status" value="1"/>
</dbReference>
<dbReference type="HAMAP" id="MF_01813">
    <property type="entry name" value="MenG_UbiE_methyltr"/>
    <property type="match status" value="1"/>
</dbReference>
<dbReference type="InterPro" id="IPR032904">
    <property type="entry name" value="MenG"/>
</dbReference>
<dbReference type="InterPro" id="IPR029063">
    <property type="entry name" value="SAM-dependent_MTases_sf"/>
</dbReference>
<dbReference type="InterPro" id="IPR004033">
    <property type="entry name" value="UbiE/COQ5_MeTrFase"/>
</dbReference>
<dbReference type="InterPro" id="IPR023576">
    <property type="entry name" value="UbiE/COQ5_MeTrFase_CS"/>
</dbReference>
<dbReference type="NCBIfam" id="TIGR01934">
    <property type="entry name" value="MenG_MenH_UbiE"/>
    <property type="match status" value="1"/>
</dbReference>
<dbReference type="NCBIfam" id="NF001244">
    <property type="entry name" value="PRK00216.1-5"/>
    <property type="match status" value="1"/>
</dbReference>
<dbReference type="PANTHER" id="PTHR43591:SF24">
    <property type="entry name" value="2-METHOXY-6-POLYPRENYL-1,4-BENZOQUINOL METHYLASE, MITOCHONDRIAL"/>
    <property type="match status" value="1"/>
</dbReference>
<dbReference type="PANTHER" id="PTHR43591">
    <property type="entry name" value="METHYLTRANSFERASE"/>
    <property type="match status" value="1"/>
</dbReference>
<dbReference type="Pfam" id="PF01209">
    <property type="entry name" value="Ubie_methyltran"/>
    <property type="match status" value="1"/>
</dbReference>
<dbReference type="SUPFAM" id="SSF53335">
    <property type="entry name" value="S-adenosyl-L-methionine-dependent methyltransferases"/>
    <property type="match status" value="1"/>
</dbReference>
<dbReference type="PROSITE" id="PS51608">
    <property type="entry name" value="SAM_MT_UBIE"/>
    <property type="match status" value="1"/>
</dbReference>
<dbReference type="PROSITE" id="PS01183">
    <property type="entry name" value="UBIE_1"/>
    <property type="match status" value="1"/>
</dbReference>
<feature type="transit peptide" description="Chloroplast" evidence="1">
    <location>
        <begin position="1"/>
        <end position="30"/>
    </location>
</feature>
<feature type="chain" id="PRO_0000406986" description="2-phytyl-1,4-beta-naphthoquinone methyltransferase, chloroplastic">
    <location>
        <begin position="31"/>
        <end position="261"/>
    </location>
</feature>
<feature type="splice variant" id="VSP_040914" description="In isoform 2." evidence="3">
    <location>
        <begin position="1"/>
        <end position="101"/>
    </location>
</feature>
<protein>
    <recommendedName>
        <fullName evidence="1">2-phytyl-1,4-beta-naphthoquinone methyltransferase, chloroplastic</fullName>
        <ecNumber evidence="1">2.1.1.329</ecNumber>
    </recommendedName>
    <alternativeName>
        <fullName evidence="1">Demethylphylloquinone methyltransferase</fullName>
    </alternativeName>
    <alternativeName>
        <fullName evidence="1">Menaquinone biosynthesis methyltransferase ubiE-like protein</fullName>
    </alternativeName>
</protein>
<gene>
    <name evidence="1" type="primary">MENG</name>
    <name type="ordered locus">At1g23360</name>
    <name type="ORF">F26F24.24</name>
</gene>